<keyword id="KW-0067">ATP-binding</keyword>
<keyword id="KW-1003">Cell membrane</keyword>
<keyword id="KW-0963">Cytoplasm</keyword>
<keyword id="KW-0472">Membrane</keyword>
<keyword id="KW-0547">Nucleotide-binding</keyword>
<keyword id="KW-0653">Protein transport</keyword>
<keyword id="KW-1185">Reference proteome</keyword>
<keyword id="KW-1278">Translocase</keyword>
<keyword id="KW-0811">Translocation</keyword>
<keyword id="KW-0813">Transport</keyword>
<gene>
    <name evidence="1" type="primary">secA</name>
    <name type="ordered locus">UU119</name>
</gene>
<feature type="chain" id="PRO_1000073495" description="Protein translocase subunit SecA">
    <location>
        <begin position="1"/>
        <end position="837"/>
    </location>
</feature>
<feature type="binding site" evidence="1">
    <location>
        <position position="83"/>
    </location>
    <ligand>
        <name>ATP</name>
        <dbReference type="ChEBI" id="CHEBI:30616"/>
    </ligand>
</feature>
<feature type="binding site" evidence="1">
    <location>
        <begin position="101"/>
        <end position="105"/>
    </location>
    <ligand>
        <name>ATP</name>
        <dbReference type="ChEBI" id="CHEBI:30616"/>
    </ligand>
</feature>
<feature type="binding site" evidence="1">
    <location>
        <position position="494"/>
    </location>
    <ligand>
        <name>ATP</name>
        <dbReference type="ChEBI" id="CHEBI:30616"/>
    </ligand>
</feature>
<reference key="1">
    <citation type="journal article" date="2000" name="Nature">
        <title>The complete sequence of the mucosal pathogen Ureaplasma urealyticum.</title>
        <authorList>
            <person name="Glass J.I."/>
            <person name="Lefkowitz E.J."/>
            <person name="Glass J.S."/>
            <person name="Heiner C.R."/>
            <person name="Chen E.Y."/>
            <person name="Cassell G.H."/>
        </authorList>
    </citation>
    <scope>NUCLEOTIDE SEQUENCE [LARGE SCALE GENOMIC DNA]</scope>
    <source>
        <strain>ATCC 700970</strain>
    </source>
</reference>
<accession>Q9PR25</accession>
<name>SECA_UREPA</name>
<proteinExistence type="inferred from homology"/>
<evidence type="ECO:0000255" key="1">
    <source>
        <dbReference type="HAMAP-Rule" id="MF_01382"/>
    </source>
</evidence>
<dbReference type="EC" id="7.4.2.8" evidence="1"/>
<dbReference type="EMBL" id="AF222894">
    <property type="protein sequence ID" value="AAF30525.1"/>
    <property type="molecule type" value="Genomic_DNA"/>
</dbReference>
<dbReference type="RefSeq" id="WP_006689106.1">
    <property type="nucleotide sequence ID" value="NC_002162.1"/>
</dbReference>
<dbReference type="SMR" id="Q9PR25"/>
<dbReference type="STRING" id="273119.UU119"/>
<dbReference type="EnsemblBacteria" id="AAF30525">
    <property type="protein sequence ID" value="AAF30525"/>
    <property type="gene ID" value="UU119"/>
</dbReference>
<dbReference type="GeneID" id="29672143"/>
<dbReference type="KEGG" id="uur:UU119"/>
<dbReference type="eggNOG" id="COG0653">
    <property type="taxonomic scope" value="Bacteria"/>
</dbReference>
<dbReference type="HOGENOM" id="CLU_005314_3_0_14"/>
<dbReference type="OrthoDB" id="9805579at2"/>
<dbReference type="Proteomes" id="UP000000423">
    <property type="component" value="Chromosome"/>
</dbReference>
<dbReference type="GO" id="GO:0031522">
    <property type="term" value="C:cell envelope Sec protein transport complex"/>
    <property type="evidence" value="ECO:0007669"/>
    <property type="project" value="TreeGrafter"/>
</dbReference>
<dbReference type="GO" id="GO:0005829">
    <property type="term" value="C:cytosol"/>
    <property type="evidence" value="ECO:0007669"/>
    <property type="project" value="TreeGrafter"/>
</dbReference>
<dbReference type="GO" id="GO:0005886">
    <property type="term" value="C:plasma membrane"/>
    <property type="evidence" value="ECO:0007669"/>
    <property type="project" value="UniProtKB-SubCell"/>
</dbReference>
<dbReference type="GO" id="GO:0005524">
    <property type="term" value="F:ATP binding"/>
    <property type="evidence" value="ECO:0007669"/>
    <property type="project" value="UniProtKB-UniRule"/>
</dbReference>
<dbReference type="GO" id="GO:0008564">
    <property type="term" value="F:protein-exporting ATPase activity"/>
    <property type="evidence" value="ECO:0007669"/>
    <property type="project" value="UniProtKB-EC"/>
</dbReference>
<dbReference type="GO" id="GO:0065002">
    <property type="term" value="P:intracellular protein transmembrane transport"/>
    <property type="evidence" value="ECO:0007669"/>
    <property type="project" value="UniProtKB-UniRule"/>
</dbReference>
<dbReference type="GO" id="GO:0017038">
    <property type="term" value="P:protein import"/>
    <property type="evidence" value="ECO:0007669"/>
    <property type="project" value="InterPro"/>
</dbReference>
<dbReference type="GO" id="GO:0006605">
    <property type="term" value="P:protein targeting"/>
    <property type="evidence" value="ECO:0007669"/>
    <property type="project" value="UniProtKB-UniRule"/>
</dbReference>
<dbReference type="GO" id="GO:0043952">
    <property type="term" value="P:protein transport by the Sec complex"/>
    <property type="evidence" value="ECO:0007669"/>
    <property type="project" value="TreeGrafter"/>
</dbReference>
<dbReference type="CDD" id="cd17928">
    <property type="entry name" value="DEXDc_SecA"/>
    <property type="match status" value="1"/>
</dbReference>
<dbReference type="CDD" id="cd18803">
    <property type="entry name" value="SF2_C_secA"/>
    <property type="match status" value="1"/>
</dbReference>
<dbReference type="FunFam" id="3.40.50.300:FF:000429">
    <property type="entry name" value="Preprotein translocase subunit SecA"/>
    <property type="match status" value="1"/>
</dbReference>
<dbReference type="Gene3D" id="1.10.3060.10">
    <property type="entry name" value="Helical scaffold and wing domains of SecA"/>
    <property type="match status" value="1"/>
</dbReference>
<dbReference type="Gene3D" id="3.40.50.300">
    <property type="entry name" value="P-loop containing nucleotide triphosphate hydrolases"/>
    <property type="match status" value="3"/>
</dbReference>
<dbReference type="Gene3D" id="3.90.1440.10">
    <property type="entry name" value="SecA, preprotein cross-linking domain"/>
    <property type="match status" value="1"/>
</dbReference>
<dbReference type="HAMAP" id="MF_01382">
    <property type="entry name" value="SecA"/>
    <property type="match status" value="1"/>
</dbReference>
<dbReference type="InterPro" id="IPR014001">
    <property type="entry name" value="Helicase_ATP-bd"/>
</dbReference>
<dbReference type="InterPro" id="IPR001650">
    <property type="entry name" value="Helicase_C-like"/>
</dbReference>
<dbReference type="InterPro" id="IPR027417">
    <property type="entry name" value="P-loop_NTPase"/>
</dbReference>
<dbReference type="InterPro" id="IPR000185">
    <property type="entry name" value="SecA"/>
</dbReference>
<dbReference type="InterPro" id="IPR020937">
    <property type="entry name" value="SecA_CS"/>
</dbReference>
<dbReference type="InterPro" id="IPR011115">
    <property type="entry name" value="SecA_DEAD"/>
</dbReference>
<dbReference type="InterPro" id="IPR014018">
    <property type="entry name" value="SecA_motor_DEAD"/>
</dbReference>
<dbReference type="InterPro" id="IPR011130">
    <property type="entry name" value="SecA_preprotein_X-link_dom"/>
</dbReference>
<dbReference type="InterPro" id="IPR044722">
    <property type="entry name" value="SecA_SF2_C"/>
</dbReference>
<dbReference type="InterPro" id="IPR011116">
    <property type="entry name" value="SecA_Wing/Scaffold"/>
</dbReference>
<dbReference type="InterPro" id="IPR036266">
    <property type="entry name" value="SecA_Wing/Scaffold_sf"/>
</dbReference>
<dbReference type="InterPro" id="IPR036670">
    <property type="entry name" value="SecA_X-link_sf"/>
</dbReference>
<dbReference type="NCBIfam" id="TIGR00963">
    <property type="entry name" value="secA"/>
    <property type="match status" value="1"/>
</dbReference>
<dbReference type="PANTHER" id="PTHR30612:SF0">
    <property type="entry name" value="CHLOROPLAST PROTEIN-TRANSPORTING ATPASE"/>
    <property type="match status" value="1"/>
</dbReference>
<dbReference type="PANTHER" id="PTHR30612">
    <property type="entry name" value="SECA INNER MEMBRANE COMPONENT OF SEC PROTEIN SECRETION SYSTEM"/>
    <property type="match status" value="1"/>
</dbReference>
<dbReference type="Pfam" id="PF21090">
    <property type="entry name" value="P-loop_SecA"/>
    <property type="match status" value="2"/>
</dbReference>
<dbReference type="Pfam" id="PF07517">
    <property type="entry name" value="SecA_DEAD"/>
    <property type="match status" value="1"/>
</dbReference>
<dbReference type="Pfam" id="PF01043">
    <property type="entry name" value="SecA_PP_bind"/>
    <property type="match status" value="1"/>
</dbReference>
<dbReference type="Pfam" id="PF07516">
    <property type="entry name" value="SecA_SW"/>
    <property type="match status" value="1"/>
</dbReference>
<dbReference type="PRINTS" id="PR00906">
    <property type="entry name" value="SECA"/>
</dbReference>
<dbReference type="SMART" id="SM00957">
    <property type="entry name" value="SecA_DEAD"/>
    <property type="match status" value="1"/>
</dbReference>
<dbReference type="SMART" id="SM00958">
    <property type="entry name" value="SecA_PP_bind"/>
    <property type="match status" value="1"/>
</dbReference>
<dbReference type="SUPFAM" id="SSF81886">
    <property type="entry name" value="Helical scaffold and wing domains of SecA"/>
    <property type="match status" value="1"/>
</dbReference>
<dbReference type="SUPFAM" id="SSF52540">
    <property type="entry name" value="P-loop containing nucleoside triphosphate hydrolases"/>
    <property type="match status" value="2"/>
</dbReference>
<dbReference type="SUPFAM" id="SSF81767">
    <property type="entry name" value="Pre-protein crosslinking domain of SecA"/>
    <property type="match status" value="1"/>
</dbReference>
<dbReference type="PROSITE" id="PS01312">
    <property type="entry name" value="SECA"/>
    <property type="match status" value="1"/>
</dbReference>
<dbReference type="PROSITE" id="PS51196">
    <property type="entry name" value="SECA_MOTOR_DEAD"/>
    <property type="match status" value="1"/>
</dbReference>
<organism>
    <name type="scientific">Ureaplasma parvum serovar 3 (strain ATCC 700970)</name>
    <dbReference type="NCBI Taxonomy" id="273119"/>
    <lineage>
        <taxon>Bacteria</taxon>
        <taxon>Bacillati</taxon>
        <taxon>Mycoplasmatota</taxon>
        <taxon>Mycoplasmoidales</taxon>
        <taxon>Mycoplasmoidaceae</taxon>
        <taxon>Ureaplasma</taxon>
    </lineage>
</organism>
<comment type="function">
    <text evidence="1">Part of the Sec protein translocase complex. Interacts with the SecYEG preprotein conducting channel. Has a central role in coupling the hydrolysis of ATP to the transfer of proteins into and across the cell membrane, serving as an ATP-driven molecular motor driving the stepwise translocation of polypeptide chains across the membrane.</text>
</comment>
<comment type="catalytic activity">
    <reaction evidence="1">
        <text>ATP + H2O + cellular proteinSide 1 = ADP + phosphate + cellular proteinSide 2.</text>
        <dbReference type="EC" id="7.4.2.8"/>
    </reaction>
</comment>
<comment type="subunit">
    <text evidence="1">Monomer and homodimer. Part of the essential Sec protein translocation apparatus which comprises SecA, SecYEG and auxiliary proteins SecDF. Other proteins may also be involved.</text>
</comment>
<comment type="subcellular location">
    <subcellularLocation>
        <location evidence="1">Cell membrane</location>
        <topology evidence="1">Peripheral membrane protein</topology>
        <orientation evidence="1">Cytoplasmic side</orientation>
    </subcellularLocation>
    <subcellularLocation>
        <location evidence="1">Cytoplasm</location>
    </subcellularLocation>
    <text evidence="1">Distribution is 50-50.</text>
</comment>
<comment type="similarity">
    <text evidence="1">Belongs to the SecA family.</text>
</comment>
<sequence length="837" mass="96317">MNLISKISPQNRILNRARLIAEEVLKKEEEYEHFSDQELINKSDDIIEYLANNNPLDDKLVEALCIIREVIYRVHNKRAFKVQIIGAIIVYFGDFAEMMTGEGKTLTLVLVAYLNALYKKGVHMVTVNEYLVKVGAEFATPVLNFLNMSVGQITANMNEYEKRNNYNCDITYTTNSELGFDYLRDNMVTNYANKVQRGLWFAIVDEGDSVLIDEARTPLIISGEPQEEIGNYVKADRFVKTLYPQDFTLDPESQSVALTESGVEKAQKFFNTKNYYNFENSDIIHKVTNALRANFTFFNGREYIVKKDDDGEDIIALVDQSTGRIMEGRSYSAGLQQAIQAKEQIKIEPENLTVATITYQSLFRLYKKLAAVSGTAITEAEEFLNIYNMVVVTIPTNKPIKRIDHPDYVFDNKRTKWKYVIADVIRRHENGQPILIGTASVEDSEILHQLLERVNIPHEVLNAKNHAREAEIIACAGEYKAVTIATNMAGRGTDIKLSPESLEAGGLCVIGTERSDSRRIDNQLRGRAGRQGDIGESRFFISMEDTLFSRFATDNLAKADDKLSEDVISTKFFTRLLNNTQKKVESLNYDTRKNLIDYDHVLSNQRELIYKQRDKILISSDNKDILYRMLDSVIDDLIYQSHNKPNEDIIDIKKLIDLATQNIFYDNYLNQDEYYGLKFEQIKTKLKKDCINFFEQKEQLMTPTIFNQILSEIMISNIDEEWTKHLDITSKIREGVNLRAYEQKAPLNIYVEDSDKLFEKLKHNVAWKTVCSIGKINYVHQDYSDLNSEFIVNDNEINENNNSIDFENFNESIPTDQTIQESFDDNQSDNEDDKNNN</sequence>
<protein>
    <recommendedName>
        <fullName evidence="1">Protein translocase subunit SecA</fullName>
        <ecNumber evidence="1">7.4.2.8</ecNumber>
    </recommendedName>
</protein>